<organism>
    <name type="scientific">Avian erythroblastosis virus (strain ts167)</name>
    <dbReference type="NCBI Taxonomy" id="103898"/>
    <lineage>
        <taxon>Viruses</taxon>
        <taxon>Riboviria</taxon>
        <taxon>Pararnavirae</taxon>
        <taxon>Artverviricota</taxon>
        <taxon>Revtraviricetes</taxon>
        <taxon>Ortervirales</taxon>
        <taxon>Retroviridae</taxon>
        <taxon>Orthoretrovirinae</taxon>
        <taxon>Alpharetrovirus</taxon>
        <taxon>Avian leukosis virus</taxon>
    </lineage>
</organism>
<sequence>MKCAHFIDGPHCVKACPAGVLGENDTLVWKYADANAVCQLCHPNCTRGCKGPGLEGCPNGSKTPSIAAGVVGGLLCLVVVGLGIGLYLRRRHIVRKRTLRRLLQERELVEPLTPSGEAPNQAHLRILKETEFKKVKVLGFGAFGTVYKGLWIPEGEKVTIPVAIKELREATSPKANKEILDEAYVMASVDNPHVCRLLGICLTSTVQLITQLMPYGCLLDYIREHKDNIGSQYLLNWCVQIAKGMNYLEERHMVHRDLAARNVLVKTPQHVKITDFGLAKQLGADEKEYHAEGGKVPIKWMALESILHRIYTHQSDVWSYGVTVWELMTFGSKPYDGIPASEISSVLEKGERLPQPPICTIDVYMIMVKCWMSDADSRPKFRELIAEFSKMARDPPRYLVIQGDERMHLPSPTDSKFYRTLMEEEDMEDIVDADEYLVPHQGFFNSPSTSRTPLLSSLSATSNNSATNCIDRNGGHPVREDGFLPAPEYVNQLMPKKPSTAMVQNQIYNYISLTAISKLPIDSRYQNSHSTAVDNPEYLE</sequence>
<evidence type="ECO:0000255" key="1">
    <source>
        <dbReference type="PROSITE-ProRule" id="PRU00159"/>
    </source>
</evidence>
<evidence type="ECO:0000255" key="2">
    <source>
        <dbReference type="PROSITE-ProRule" id="PRU10028"/>
    </source>
</evidence>
<proteinExistence type="inferred from homology"/>
<organismHost>
    <name type="scientific">Galliformes</name>
    <dbReference type="NCBI Taxonomy" id="8976"/>
</organismHost>
<dbReference type="EC" id="2.7.10.1"/>
<dbReference type="EMBL" id="M13179">
    <property type="protein sequence ID" value="AAA42401.1"/>
    <property type="molecule type" value="Genomic_RNA"/>
</dbReference>
<dbReference type="PIR" id="A25231">
    <property type="entry name" value="TVFVEB"/>
</dbReference>
<dbReference type="SMR" id="P11273"/>
<dbReference type="BRENDA" id="2.7.10.1">
    <property type="organism ID" value="589"/>
</dbReference>
<dbReference type="GO" id="GO:0005886">
    <property type="term" value="C:plasma membrane"/>
    <property type="evidence" value="ECO:0007669"/>
    <property type="project" value="TreeGrafter"/>
</dbReference>
<dbReference type="GO" id="GO:0043235">
    <property type="term" value="C:receptor complex"/>
    <property type="evidence" value="ECO:0007669"/>
    <property type="project" value="TreeGrafter"/>
</dbReference>
<dbReference type="GO" id="GO:0005524">
    <property type="term" value="F:ATP binding"/>
    <property type="evidence" value="ECO:0007669"/>
    <property type="project" value="UniProtKB-KW"/>
</dbReference>
<dbReference type="GO" id="GO:0048408">
    <property type="term" value="F:epidermal growth factor binding"/>
    <property type="evidence" value="ECO:0007669"/>
    <property type="project" value="TreeGrafter"/>
</dbReference>
<dbReference type="GO" id="GO:0005006">
    <property type="term" value="F:epidermal growth factor receptor activity"/>
    <property type="evidence" value="ECO:0007669"/>
    <property type="project" value="TreeGrafter"/>
</dbReference>
<dbReference type="GO" id="GO:0043066">
    <property type="term" value="P:negative regulation of apoptotic process"/>
    <property type="evidence" value="ECO:0007669"/>
    <property type="project" value="TreeGrafter"/>
</dbReference>
<dbReference type="GO" id="GO:0050679">
    <property type="term" value="P:positive regulation of epithelial cell proliferation"/>
    <property type="evidence" value="ECO:0007669"/>
    <property type="project" value="TreeGrafter"/>
</dbReference>
<dbReference type="CDD" id="cd05108">
    <property type="entry name" value="PTKc_EGFR"/>
    <property type="match status" value="1"/>
</dbReference>
<dbReference type="CDD" id="cd12093">
    <property type="entry name" value="TM_ErbB1"/>
    <property type="match status" value="1"/>
</dbReference>
<dbReference type="FunFam" id="1.10.510.10:FF:000027">
    <property type="entry name" value="Receptor protein-tyrosine kinase"/>
    <property type="match status" value="1"/>
</dbReference>
<dbReference type="FunFam" id="2.10.220.10:FF:000008">
    <property type="entry name" value="Receptor protein-tyrosine kinase"/>
    <property type="match status" value="1"/>
</dbReference>
<dbReference type="FunFam" id="3.30.200.20:FF:000044">
    <property type="entry name" value="Receptor protein-tyrosine kinase"/>
    <property type="match status" value="1"/>
</dbReference>
<dbReference type="FunFam" id="4.10.1140.10:FF:000001">
    <property type="entry name" value="Receptor protein-tyrosine kinase"/>
    <property type="match status" value="1"/>
</dbReference>
<dbReference type="Gene3D" id="6.10.250.2930">
    <property type="match status" value="1"/>
</dbReference>
<dbReference type="Gene3D" id="2.10.220.10">
    <property type="entry name" value="Hormone Receptor, Insulin-like Growth Factor Receptor 1, Chain A, domain 2"/>
    <property type="match status" value="1"/>
</dbReference>
<dbReference type="Gene3D" id="3.30.200.20">
    <property type="entry name" value="Phosphorylase Kinase, domain 1"/>
    <property type="match status" value="1"/>
</dbReference>
<dbReference type="Gene3D" id="1.10.510.10">
    <property type="entry name" value="Transferase(Phosphotransferase) domain 1"/>
    <property type="match status" value="1"/>
</dbReference>
<dbReference type="InterPro" id="IPR044912">
    <property type="entry name" value="Egfr_JX_dom"/>
</dbReference>
<dbReference type="InterPro" id="IPR032778">
    <property type="entry name" value="GF_recep_IV"/>
</dbReference>
<dbReference type="InterPro" id="IPR009030">
    <property type="entry name" value="Growth_fac_rcpt_cys_sf"/>
</dbReference>
<dbReference type="InterPro" id="IPR011009">
    <property type="entry name" value="Kinase-like_dom_sf"/>
</dbReference>
<dbReference type="InterPro" id="IPR000719">
    <property type="entry name" value="Prot_kinase_dom"/>
</dbReference>
<dbReference type="InterPro" id="IPR017441">
    <property type="entry name" value="Protein_kinase_ATP_BS"/>
</dbReference>
<dbReference type="InterPro" id="IPR050122">
    <property type="entry name" value="RTK"/>
</dbReference>
<dbReference type="InterPro" id="IPR001245">
    <property type="entry name" value="Ser-Thr/Tyr_kinase_cat_dom"/>
</dbReference>
<dbReference type="InterPro" id="IPR049328">
    <property type="entry name" value="TM_ErbB1"/>
</dbReference>
<dbReference type="InterPro" id="IPR008266">
    <property type="entry name" value="Tyr_kinase_AS"/>
</dbReference>
<dbReference type="InterPro" id="IPR020635">
    <property type="entry name" value="Tyr_kinase_cat_dom"/>
</dbReference>
<dbReference type="PANTHER" id="PTHR24416:SF91">
    <property type="entry name" value="EPIDERMAL GROWTH FACTOR RECEPTOR"/>
    <property type="match status" value="1"/>
</dbReference>
<dbReference type="PANTHER" id="PTHR24416">
    <property type="entry name" value="TYROSINE-PROTEIN KINASE RECEPTOR"/>
    <property type="match status" value="1"/>
</dbReference>
<dbReference type="Pfam" id="PF14843">
    <property type="entry name" value="GF_recep_IV"/>
    <property type="match status" value="1"/>
</dbReference>
<dbReference type="Pfam" id="PF07714">
    <property type="entry name" value="PK_Tyr_Ser-Thr"/>
    <property type="match status" value="1"/>
</dbReference>
<dbReference type="Pfam" id="PF21314">
    <property type="entry name" value="TM_ErbB1"/>
    <property type="match status" value="1"/>
</dbReference>
<dbReference type="PRINTS" id="PR00109">
    <property type="entry name" value="TYRKINASE"/>
</dbReference>
<dbReference type="SMART" id="SM00219">
    <property type="entry name" value="TyrKc"/>
    <property type="match status" value="1"/>
</dbReference>
<dbReference type="SUPFAM" id="SSF57184">
    <property type="entry name" value="Growth factor receptor domain"/>
    <property type="match status" value="1"/>
</dbReference>
<dbReference type="SUPFAM" id="SSF56112">
    <property type="entry name" value="Protein kinase-like (PK-like)"/>
    <property type="match status" value="1"/>
</dbReference>
<dbReference type="PROSITE" id="PS00107">
    <property type="entry name" value="PROTEIN_KINASE_ATP"/>
    <property type="match status" value="1"/>
</dbReference>
<dbReference type="PROSITE" id="PS50011">
    <property type="entry name" value="PROTEIN_KINASE_DOM"/>
    <property type="match status" value="1"/>
</dbReference>
<dbReference type="PROSITE" id="PS00109">
    <property type="entry name" value="PROTEIN_KINASE_TYR"/>
    <property type="match status" value="1"/>
</dbReference>
<gene>
    <name type="primary">V-ERBB</name>
</gene>
<reference key="1">
    <citation type="journal article" date="1986" name="Mol. Cell. Biol.">
        <title>A single amino acid substitution in v-erbB confers a thermolabile phenotype to ts167 avian erythroblastosis virus-transformed erythroid cells.</title>
        <authorList>
            <person name="Choi O.R."/>
            <person name="Trainor C."/>
            <person name="Graf T."/>
            <person name="Beug H."/>
            <person name="Engel J.D."/>
        </authorList>
    </citation>
    <scope>NUCLEOTIDE SEQUENCE [GENOMIC RNA]</scope>
</reference>
<comment type="catalytic activity">
    <reaction evidence="2">
        <text>L-tyrosyl-[protein] + ATP = O-phospho-L-tyrosyl-[protein] + ADP + H(+)</text>
        <dbReference type="Rhea" id="RHEA:10596"/>
        <dbReference type="Rhea" id="RHEA-COMP:10136"/>
        <dbReference type="Rhea" id="RHEA-COMP:20101"/>
        <dbReference type="ChEBI" id="CHEBI:15378"/>
        <dbReference type="ChEBI" id="CHEBI:30616"/>
        <dbReference type="ChEBI" id="CHEBI:46858"/>
        <dbReference type="ChEBI" id="CHEBI:61978"/>
        <dbReference type="ChEBI" id="CHEBI:456216"/>
        <dbReference type="EC" id="2.7.10.1"/>
    </reaction>
</comment>
<comment type="similarity">
    <text evidence="1">Belongs to the protein kinase superfamily. Tyr protein kinase family. EGF receptor subfamily.</text>
</comment>
<accession>P11273</accession>
<keyword id="KW-0067">ATP-binding</keyword>
<keyword id="KW-0418">Kinase</keyword>
<keyword id="KW-0547">Nucleotide-binding</keyword>
<keyword id="KW-0553">Oncogene</keyword>
<keyword id="KW-0597">Phosphoprotein</keyword>
<keyword id="KW-0808">Transferase</keyword>
<keyword id="KW-0829">Tyrosine-protein kinase</keyword>
<name>ERBB_AVIEU</name>
<protein>
    <recommendedName>
        <fullName>Tyrosine-protein kinase transforming protein erbB</fullName>
        <ecNumber>2.7.10.1</ecNumber>
    </recommendedName>
</protein>
<feature type="chain" id="PRO_0000160253" description="Tyrosine-protein kinase transforming protein erbB">
    <location>
        <begin position="1"/>
        <end position="540"/>
    </location>
</feature>
<feature type="domain" description="Protein kinase" evidence="1">
    <location>
        <begin position="132"/>
        <end position="399"/>
    </location>
</feature>
<feature type="active site" description="Proton acceptor" evidence="1 2">
    <location>
        <position position="257"/>
    </location>
</feature>
<feature type="binding site" evidence="1">
    <location>
        <begin position="138"/>
        <end position="146"/>
    </location>
    <ligand>
        <name>ATP</name>
        <dbReference type="ChEBI" id="CHEBI:30616"/>
    </ligand>
</feature>
<feature type="binding site" evidence="1">
    <location>
        <position position="165"/>
    </location>
    <ligand>
        <name>ATP</name>
        <dbReference type="ChEBI" id="CHEBI:30616"/>
    </ligand>
</feature>
<feature type="sequence variant" description="In thermolabile v-erbB.">
    <original>H</original>
    <variation>D</variation>
    <location>
        <position position="270"/>
    </location>
</feature>